<organism>
    <name type="scientific">Thermus thermophilus (strain ATCC BAA-163 / DSM 7039 / HB27)</name>
    <dbReference type="NCBI Taxonomy" id="262724"/>
    <lineage>
        <taxon>Bacteria</taxon>
        <taxon>Thermotogati</taxon>
        <taxon>Deinococcota</taxon>
        <taxon>Deinococci</taxon>
        <taxon>Thermales</taxon>
        <taxon>Thermaceae</taxon>
        <taxon>Thermus</taxon>
    </lineage>
</organism>
<proteinExistence type="inferred from homology"/>
<name>DXS_THET2</name>
<evidence type="ECO:0000255" key="1">
    <source>
        <dbReference type="HAMAP-Rule" id="MF_00315"/>
    </source>
</evidence>
<gene>
    <name evidence="1" type="primary">dxs</name>
    <name type="ordered locus">TT_C1614</name>
</gene>
<comment type="function">
    <text evidence="1">Catalyzes the acyloin condensation reaction between C atoms 2 and 3 of pyruvate and glyceraldehyde 3-phosphate to yield 1-deoxy-D-xylulose-5-phosphate (DXP).</text>
</comment>
<comment type="catalytic activity">
    <reaction evidence="1">
        <text>D-glyceraldehyde 3-phosphate + pyruvate + H(+) = 1-deoxy-D-xylulose 5-phosphate + CO2</text>
        <dbReference type="Rhea" id="RHEA:12605"/>
        <dbReference type="ChEBI" id="CHEBI:15361"/>
        <dbReference type="ChEBI" id="CHEBI:15378"/>
        <dbReference type="ChEBI" id="CHEBI:16526"/>
        <dbReference type="ChEBI" id="CHEBI:57792"/>
        <dbReference type="ChEBI" id="CHEBI:59776"/>
        <dbReference type="EC" id="2.2.1.7"/>
    </reaction>
</comment>
<comment type="cofactor">
    <cofactor evidence="1">
        <name>Mg(2+)</name>
        <dbReference type="ChEBI" id="CHEBI:18420"/>
    </cofactor>
    <text evidence="1">Binds 1 Mg(2+) ion per subunit.</text>
</comment>
<comment type="cofactor">
    <cofactor evidence="1">
        <name>thiamine diphosphate</name>
        <dbReference type="ChEBI" id="CHEBI:58937"/>
    </cofactor>
    <text evidence="1">Binds 1 thiamine pyrophosphate per subunit.</text>
</comment>
<comment type="pathway">
    <text evidence="1">Metabolic intermediate biosynthesis; 1-deoxy-D-xylulose 5-phosphate biosynthesis; 1-deoxy-D-xylulose 5-phosphate from D-glyceraldehyde 3-phosphate and pyruvate: step 1/1.</text>
</comment>
<comment type="subunit">
    <text evidence="1">Homodimer.</text>
</comment>
<comment type="similarity">
    <text evidence="1">Belongs to the transketolase family. DXPS subfamily.</text>
</comment>
<protein>
    <recommendedName>
        <fullName evidence="1">1-deoxy-D-xylulose-5-phosphate synthase</fullName>
        <ecNumber evidence="1">2.2.1.7</ecNumber>
    </recommendedName>
    <alternativeName>
        <fullName evidence="1">1-deoxyxylulose-5-phosphate synthase</fullName>
        <shortName evidence="1">DXP synthase</shortName>
        <shortName evidence="1">DXPS</shortName>
    </alternativeName>
</protein>
<sequence length="615" mass="67537">MILDKVNSPEDLKRLSLEELLLLAEEIRSEIIRVTAQNGGHLASSLGAVELVLALHRVFDSPRDRILFDVGHQAYAHKLVTGRKDRFHTLRKEGGISGFTKVSESPHDAITAGHASTSLANALGMVLARDLMGEDYHVVAVIGDGALTGGMALAALNKIGELQKRMLIVLNDNEMSISENVGALNKYFKELQIRKWVQDAEKLGKNILERISPQLFGLVDRAKEAAKLLLHQENPFYAWGIRYVGPVDGHDLKGLVHILEHLKALDGPTLLHVVTKKGKGYKVAEADPIYWHGPPGFDPKKPEKVSKGYTWSQAFGDAVTELAHMEPRLFVLTPAMREGSGLVRYSLEHPERYLDVGICEDVAVTTAAGLALRGMKPIVAIYSTFLQRAYDQVIHDVAIENLPVVFAIDRAGIVGADGATHHGVFDIAYLRTVPNLQIAAPKDALELRAMLKKALEVGGPVAIRYPRDNVERAPEGVWPEIAWGKWEVLKEGTEAYILAFGKTLKYALEAAGDDPRVGVVNARFLKPLDREMLRALSRYKLLTVEDHQRMGGFGSAVLEALNEMGLKPEVQVLGLPDRFFEHGAIPSLHRQAGIDAEGIRKALAAMGVAVVHERA</sequence>
<keyword id="KW-0414">Isoprene biosynthesis</keyword>
<keyword id="KW-0460">Magnesium</keyword>
<keyword id="KW-0479">Metal-binding</keyword>
<keyword id="KW-0784">Thiamine biosynthesis</keyword>
<keyword id="KW-0786">Thiamine pyrophosphate</keyword>
<keyword id="KW-0808">Transferase</keyword>
<accession>Q72H81</accession>
<reference key="1">
    <citation type="journal article" date="2004" name="Nat. Biotechnol.">
        <title>The genome sequence of the extreme thermophile Thermus thermophilus.</title>
        <authorList>
            <person name="Henne A."/>
            <person name="Brueggemann H."/>
            <person name="Raasch C."/>
            <person name="Wiezer A."/>
            <person name="Hartsch T."/>
            <person name="Liesegang H."/>
            <person name="Johann A."/>
            <person name="Lienard T."/>
            <person name="Gohl O."/>
            <person name="Martinez-Arias R."/>
            <person name="Jacobi C."/>
            <person name="Starkuviene V."/>
            <person name="Schlenczeck S."/>
            <person name="Dencker S."/>
            <person name="Huber R."/>
            <person name="Klenk H.-P."/>
            <person name="Kramer W."/>
            <person name="Merkl R."/>
            <person name="Gottschalk G."/>
            <person name="Fritz H.-J."/>
        </authorList>
    </citation>
    <scope>NUCLEOTIDE SEQUENCE [LARGE SCALE GENOMIC DNA]</scope>
    <source>
        <strain>ATCC BAA-163 / DSM 7039 / HB27</strain>
    </source>
</reference>
<feature type="chain" id="PRO_0000256497" description="1-deoxy-D-xylulose-5-phosphate synthase">
    <location>
        <begin position="1"/>
        <end position="615"/>
    </location>
</feature>
<feature type="binding site" evidence="1">
    <location>
        <position position="72"/>
    </location>
    <ligand>
        <name>thiamine diphosphate</name>
        <dbReference type="ChEBI" id="CHEBI:58937"/>
    </ligand>
</feature>
<feature type="binding site" evidence="1">
    <location>
        <begin position="113"/>
        <end position="115"/>
    </location>
    <ligand>
        <name>thiamine diphosphate</name>
        <dbReference type="ChEBI" id="CHEBI:58937"/>
    </ligand>
</feature>
<feature type="binding site" evidence="1">
    <location>
        <position position="144"/>
    </location>
    <ligand>
        <name>Mg(2+)</name>
        <dbReference type="ChEBI" id="CHEBI:18420"/>
    </ligand>
</feature>
<feature type="binding site" evidence="1">
    <location>
        <begin position="145"/>
        <end position="146"/>
    </location>
    <ligand>
        <name>thiamine diphosphate</name>
        <dbReference type="ChEBI" id="CHEBI:58937"/>
    </ligand>
</feature>
<feature type="binding site" evidence="1">
    <location>
        <position position="173"/>
    </location>
    <ligand>
        <name>Mg(2+)</name>
        <dbReference type="ChEBI" id="CHEBI:18420"/>
    </ligand>
</feature>
<feature type="binding site" evidence="1">
    <location>
        <position position="173"/>
    </location>
    <ligand>
        <name>thiamine diphosphate</name>
        <dbReference type="ChEBI" id="CHEBI:58937"/>
    </ligand>
</feature>
<feature type="binding site" evidence="1">
    <location>
        <position position="281"/>
    </location>
    <ligand>
        <name>thiamine diphosphate</name>
        <dbReference type="ChEBI" id="CHEBI:58937"/>
    </ligand>
</feature>
<feature type="binding site" evidence="1">
    <location>
        <position position="360"/>
    </location>
    <ligand>
        <name>thiamine diphosphate</name>
        <dbReference type="ChEBI" id="CHEBI:58937"/>
    </ligand>
</feature>
<dbReference type="EC" id="2.2.1.7" evidence="1"/>
<dbReference type="EMBL" id="AE017221">
    <property type="protein sequence ID" value="AAS81956.1"/>
    <property type="molecule type" value="Genomic_DNA"/>
</dbReference>
<dbReference type="RefSeq" id="WP_011173985.1">
    <property type="nucleotide sequence ID" value="NC_005835.1"/>
</dbReference>
<dbReference type="SMR" id="Q72H81"/>
<dbReference type="KEGG" id="tth:TT_C1614"/>
<dbReference type="eggNOG" id="COG1154">
    <property type="taxonomic scope" value="Bacteria"/>
</dbReference>
<dbReference type="HOGENOM" id="CLU_009227_1_4_0"/>
<dbReference type="OrthoDB" id="9803371at2"/>
<dbReference type="UniPathway" id="UPA00064">
    <property type="reaction ID" value="UER00091"/>
</dbReference>
<dbReference type="Proteomes" id="UP000000592">
    <property type="component" value="Chromosome"/>
</dbReference>
<dbReference type="GO" id="GO:0005829">
    <property type="term" value="C:cytosol"/>
    <property type="evidence" value="ECO:0007669"/>
    <property type="project" value="TreeGrafter"/>
</dbReference>
<dbReference type="GO" id="GO:0008661">
    <property type="term" value="F:1-deoxy-D-xylulose-5-phosphate synthase activity"/>
    <property type="evidence" value="ECO:0007669"/>
    <property type="project" value="UniProtKB-UniRule"/>
</dbReference>
<dbReference type="GO" id="GO:0000287">
    <property type="term" value="F:magnesium ion binding"/>
    <property type="evidence" value="ECO:0007669"/>
    <property type="project" value="UniProtKB-UniRule"/>
</dbReference>
<dbReference type="GO" id="GO:0030976">
    <property type="term" value="F:thiamine pyrophosphate binding"/>
    <property type="evidence" value="ECO:0007669"/>
    <property type="project" value="UniProtKB-UniRule"/>
</dbReference>
<dbReference type="GO" id="GO:0052865">
    <property type="term" value="P:1-deoxy-D-xylulose 5-phosphate biosynthetic process"/>
    <property type="evidence" value="ECO:0007669"/>
    <property type="project" value="UniProtKB-UniPathway"/>
</dbReference>
<dbReference type="GO" id="GO:0019288">
    <property type="term" value="P:isopentenyl diphosphate biosynthetic process, methylerythritol 4-phosphate pathway"/>
    <property type="evidence" value="ECO:0007669"/>
    <property type="project" value="TreeGrafter"/>
</dbReference>
<dbReference type="GO" id="GO:0016114">
    <property type="term" value="P:terpenoid biosynthetic process"/>
    <property type="evidence" value="ECO:0007669"/>
    <property type="project" value="UniProtKB-UniRule"/>
</dbReference>
<dbReference type="GO" id="GO:0009228">
    <property type="term" value="P:thiamine biosynthetic process"/>
    <property type="evidence" value="ECO:0007669"/>
    <property type="project" value="UniProtKB-UniRule"/>
</dbReference>
<dbReference type="CDD" id="cd02007">
    <property type="entry name" value="TPP_DXS"/>
    <property type="match status" value="1"/>
</dbReference>
<dbReference type="CDD" id="cd07033">
    <property type="entry name" value="TPP_PYR_DXS_TK_like"/>
    <property type="match status" value="1"/>
</dbReference>
<dbReference type="FunFam" id="3.40.50.970:FF:000005">
    <property type="entry name" value="1-deoxy-D-xylulose-5-phosphate synthase"/>
    <property type="match status" value="1"/>
</dbReference>
<dbReference type="Gene3D" id="3.40.50.920">
    <property type="match status" value="1"/>
</dbReference>
<dbReference type="Gene3D" id="3.40.50.970">
    <property type="match status" value="2"/>
</dbReference>
<dbReference type="HAMAP" id="MF_00315">
    <property type="entry name" value="DXP_synth"/>
    <property type="match status" value="1"/>
</dbReference>
<dbReference type="InterPro" id="IPR005477">
    <property type="entry name" value="Dxylulose-5-P_synthase"/>
</dbReference>
<dbReference type="InterPro" id="IPR029061">
    <property type="entry name" value="THDP-binding"/>
</dbReference>
<dbReference type="InterPro" id="IPR009014">
    <property type="entry name" value="Transketo_C/PFOR_II"/>
</dbReference>
<dbReference type="InterPro" id="IPR005475">
    <property type="entry name" value="Transketolase-like_Pyr-bd"/>
</dbReference>
<dbReference type="InterPro" id="IPR020826">
    <property type="entry name" value="Transketolase_BS"/>
</dbReference>
<dbReference type="InterPro" id="IPR033248">
    <property type="entry name" value="Transketolase_C"/>
</dbReference>
<dbReference type="NCBIfam" id="TIGR00204">
    <property type="entry name" value="dxs"/>
    <property type="match status" value="1"/>
</dbReference>
<dbReference type="NCBIfam" id="NF003933">
    <property type="entry name" value="PRK05444.2-2"/>
    <property type="match status" value="1"/>
</dbReference>
<dbReference type="PANTHER" id="PTHR43322">
    <property type="entry name" value="1-D-DEOXYXYLULOSE 5-PHOSPHATE SYNTHASE-RELATED"/>
    <property type="match status" value="1"/>
</dbReference>
<dbReference type="PANTHER" id="PTHR43322:SF5">
    <property type="entry name" value="1-DEOXY-D-XYLULOSE-5-PHOSPHATE SYNTHASE, CHLOROPLASTIC"/>
    <property type="match status" value="1"/>
</dbReference>
<dbReference type="Pfam" id="PF13292">
    <property type="entry name" value="DXP_synthase_N"/>
    <property type="match status" value="1"/>
</dbReference>
<dbReference type="Pfam" id="PF02779">
    <property type="entry name" value="Transket_pyr"/>
    <property type="match status" value="1"/>
</dbReference>
<dbReference type="Pfam" id="PF02780">
    <property type="entry name" value="Transketolase_C"/>
    <property type="match status" value="1"/>
</dbReference>
<dbReference type="SMART" id="SM00861">
    <property type="entry name" value="Transket_pyr"/>
    <property type="match status" value="1"/>
</dbReference>
<dbReference type="SUPFAM" id="SSF52518">
    <property type="entry name" value="Thiamin diphosphate-binding fold (THDP-binding)"/>
    <property type="match status" value="2"/>
</dbReference>
<dbReference type="SUPFAM" id="SSF52922">
    <property type="entry name" value="TK C-terminal domain-like"/>
    <property type="match status" value="1"/>
</dbReference>
<dbReference type="PROSITE" id="PS00802">
    <property type="entry name" value="TRANSKETOLASE_2"/>
    <property type="match status" value="1"/>
</dbReference>